<proteinExistence type="inferred from homology"/>
<feature type="chain" id="PRO_1000197186" description="Glycine--tRNA ligase beta subunit">
    <location>
        <begin position="1"/>
        <end position="689"/>
    </location>
</feature>
<evidence type="ECO:0000255" key="1">
    <source>
        <dbReference type="HAMAP-Rule" id="MF_00255"/>
    </source>
</evidence>
<organism>
    <name type="scientific">Escherichia coli (strain 55989 / EAEC)</name>
    <dbReference type="NCBI Taxonomy" id="585055"/>
    <lineage>
        <taxon>Bacteria</taxon>
        <taxon>Pseudomonadati</taxon>
        <taxon>Pseudomonadota</taxon>
        <taxon>Gammaproteobacteria</taxon>
        <taxon>Enterobacterales</taxon>
        <taxon>Enterobacteriaceae</taxon>
        <taxon>Escherichia</taxon>
    </lineage>
</organism>
<name>SYGB_ECO55</name>
<comment type="catalytic activity">
    <reaction evidence="1">
        <text>tRNA(Gly) + glycine + ATP = glycyl-tRNA(Gly) + AMP + diphosphate</text>
        <dbReference type="Rhea" id="RHEA:16013"/>
        <dbReference type="Rhea" id="RHEA-COMP:9664"/>
        <dbReference type="Rhea" id="RHEA-COMP:9683"/>
        <dbReference type="ChEBI" id="CHEBI:30616"/>
        <dbReference type="ChEBI" id="CHEBI:33019"/>
        <dbReference type="ChEBI" id="CHEBI:57305"/>
        <dbReference type="ChEBI" id="CHEBI:78442"/>
        <dbReference type="ChEBI" id="CHEBI:78522"/>
        <dbReference type="ChEBI" id="CHEBI:456215"/>
        <dbReference type="EC" id="6.1.1.14"/>
    </reaction>
</comment>
<comment type="subunit">
    <text evidence="1">Tetramer of two alpha and two beta subunits.</text>
</comment>
<comment type="subcellular location">
    <subcellularLocation>
        <location evidence="1">Cytoplasm</location>
    </subcellularLocation>
</comment>
<comment type="similarity">
    <text evidence="1">Belongs to the class-II aminoacyl-tRNA synthetase family.</text>
</comment>
<gene>
    <name evidence="1" type="primary">glyS</name>
    <name type="ordered locus">EC55989_4013</name>
</gene>
<dbReference type="EC" id="6.1.1.14" evidence="1"/>
<dbReference type="EMBL" id="CU928145">
    <property type="protein sequence ID" value="CAV00497.1"/>
    <property type="molecule type" value="Genomic_DNA"/>
</dbReference>
<dbReference type="RefSeq" id="WP_001291771.1">
    <property type="nucleotide sequence ID" value="NC_011748.1"/>
</dbReference>
<dbReference type="SMR" id="B7L6X3"/>
<dbReference type="GeneID" id="93778289"/>
<dbReference type="KEGG" id="eck:EC55989_4013"/>
<dbReference type="HOGENOM" id="CLU_007220_2_2_6"/>
<dbReference type="Proteomes" id="UP000000746">
    <property type="component" value="Chromosome"/>
</dbReference>
<dbReference type="GO" id="GO:0005829">
    <property type="term" value="C:cytosol"/>
    <property type="evidence" value="ECO:0007669"/>
    <property type="project" value="TreeGrafter"/>
</dbReference>
<dbReference type="GO" id="GO:0004814">
    <property type="term" value="F:arginine-tRNA ligase activity"/>
    <property type="evidence" value="ECO:0007669"/>
    <property type="project" value="InterPro"/>
</dbReference>
<dbReference type="GO" id="GO:0005524">
    <property type="term" value="F:ATP binding"/>
    <property type="evidence" value="ECO:0007669"/>
    <property type="project" value="UniProtKB-UniRule"/>
</dbReference>
<dbReference type="GO" id="GO:0004820">
    <property type="term" value="F:glycine-tRNA ligase activity"/>
    <property type="evidence" value="ECO:0007669"/>
    <property type="project" value="UniProtKB-UniRule"/>
</dbReference>
<dbReference type="GO" id="GO:0006420">
    <property type="term" value="P:arginyl-tRNA aminoacylation"/>
    <property type="evidence" value="ECO:0007669"/>
    <property type="project" value="InterPro"/>
</dbReference>
<dbReference type="GO" id="GO:0006426">
    <property type="term" value="P:glycyl-tRNA aminoacylation"/>
    <property type="evidence" value="ECO:0007669"/>
    <property type="project" value="UniProtKB-UniRule"/>
</dbReference>
<dbReference type="HAMAP" id="MF_00255">
    <property type="entry name" value="Gly_tRNA_synth_beta"/>
    <property type="match status" value="1"/>
</dbReference>
<dbReference type="InterPro" id="IPR008909">
    <property type="entry name" value="DALR_anticod-bd"/>
</dbReference>
<dbReference type="InterPro" id="IPR015944">
    <property type="entry name" value="Gly-tRNA-synth_bsu"/>
</dbReference>
<dbReference type="InterPro" id="IPR006194">
    <property type="entry name" value="Gly-tRNA-synth_heterodimer"/>
</dbReference>
<dbReference type="NCBIfam" id="TIGR00211">
    <property type="entry name" value="glyS"/>
    <property type="match status" value="1"/>
</dbReference>
<dbReference type="PANTHER" id="PTHR30075:SF2">
    <property type="entry name" value="GLYCINE--TRNA LIGASE, CHLOROPLASTIC_MITOCHONDRIAL 2"/>
    <property type="match status" value="1"/>
</dbReference>
<dbReference type="PANTHER" id="PTHR30075">
    <property type="entry name" value="GLYCYL-TRNA SYNTHETASE"/>
    <property type="match status" value="1"/>
</dbReference>
<dbReference type="Pfam" id="PF05746">
    <property type="entry name" value="DALR_1"/>
    <property type="match status" value="1"/>
</dbReference>
<dbReference type="Pfam" id="PF02092">
    <property type="entry name" value="tRNA_synt_2f"/>
    <property type="match status" value="1"/>
</dbReference>
<dbReference type="PRINTS" id="PR01045">
    <property type="entry name" value="TRNASYNTHGB"/>
</dbReference>
<dbReference type="SUPFAM" id="SSF109604">
    <property type="entry name" value="HD-domain/PDEase-like"/>
    <property type="match status" value="1"/>
</dbReference>
<dbReference type="PROSITE" id="PS50861">
    <property type="entry name" value="AA_TRNA_LIGASE_II_GLYAB"/>
    <property type="match status" value="1"/>
</dbReference>
<reference key="1">
    <citation type="journal article" date="2009" name="PLoS Genet.">
        <title>Organised genome dynamics in the Escherichia coli species results in highly diverse adaptive paths.</title>
        <authorList>
            <person name="Touchon M."/>
            <person name="Hoede C."/>
            <person name="Tenaillon O."/>
            <person name="Barbe V."/>
            <person name="Baeriswyl S."/>
            <person name="Bidet P."/>
            <person name="Bingen E."/>
            <person name="Bonacorsi S."/>
            <person name="Bouchier C."/>
            <person name="Bouvet O."/>
            <person name="Calteau A."/>
            <person name="Chiapello H."/>
            <person name="Clermont O."/>
            <person name="Cruveiller S."/>
            <person name="Danchin A."/>
            <person name="Diard M."/>
            <person name="Dossat C."/>
            <person name="Karoui M.E."/>
            <person name="Frapy E."/>
            <person name="Garry L."/>
            <person name="Ghigo J.M."/>
            <person name="Gilles A.M."/>
            <person name="Johnson J."/>
            <person name="Le Bouguenec C."/>
            <person name="Lescat M."/>
            <person name="Mangenot S."/>
            <person name="Martinez-Jehanne V."/>
            <person name="Matic I."/>
            <person name="Nassif X."/>
            <person name="Oztas S."/>
            <person name="Petit M.A."/>
            <person name="Pichon C."/>
            <person name="Rouy Z."/>
            <person name="Ruf C.S."/>
            <person name="Schneider D."/>
            <person name="Tourret J."/>
            <person name="Vacherie B."/>
            <person name="Vallenet D."/>
            <person name="Medigue C."/>
            <person name="Rocha E.P.C."/>
            <person name="Denamur E."/>
        </authorList>
    </citation>
    <scope>NUCLEOTIDE SEQUENCE [LARGE SCALE GENOMIC DNA]</scope>
    <source>
        <strain>55989 / EAEC</strain>
    </source>
</reference>
<protein>
    <recommendedName>
        <fullName evidence="1">Glycine--tRNA ligase beta subunit</fullName>
        <ecNumber evidence="1">6.1.1.14</ecNumber>
    </recommendedName>
    <alternativeName>
        <fullName evidence="1">Glycyl-tRNA synthetase beta subunit</fullName>
        <shortName evidence="1">GlyRS</shortName>
    </alternativeName>
</protein>
<sequence>MSEKTFLVEIGTEELPPKALRSLAESFAANFTAELDNAGLAHGTVQWFAAPRRLALKVANLAEAQPDREIEKRGPAIAQAFDAEGKPSKAAEGWARGCGITVDQAERLTTDKGEWLLYRAHVKGESTEALLPNMVATSLAKLPIPKLMRWGASDVHFVRPVHTVTLLLGDKVIPATILGIQSDRVIRGHRFMGEPEFTIDNADQYPEILRERGKVIADYEERKAKIKADAEEAARKIGGNADLSESLLEEVASLVEWPVVLTAKFEEKFLAVPAEALVYTMKGDQKYFPVYANDGKLLPNFIFVANIESKDPQQIISGNEKVVRPRLADAEFFFNTDRKKRLEDNLPRLQTVLFQQQLGTLRDKTDRIQALAGWIAEQIGADVNHATRAGLLSKCDLMTNMVFEFTDTQGVMGMHYARHDGEAEDVAVALNEQYQPRFAGDDLPSNPVACALAIADKMDTLAGIFGIGQHPKGDKDPFALRRAALGVLRIIVEKNLNLDLQTLTEEAVRLYGDKLTNANVVDDVIDFMLGRFRAWYQDEGYTVDTIQAVLARRPTRPADFDARMKAVSHFRTLDAAAALAAANKRVSNILAKSDEVLSDRVNASTLKEPEEIKLAMQVVVLRDKLEPYFAEGRYQDALVELAELREPVDAFFDKVMVMVDDKELRLNRLTMLEKLRELFLRVADISLLQ</sequence>
<accession>B7L6X3</accession>
<keyword id="KW-0030">Aminoacyl-tRNA synthetase</keyword>
<keyword id="KW-0067">ATP-binding</keyword>
<keyword id="KW-0963">Cytoplasm</keyword>
<keyword id="KW-0436">Ligase</keyword>
<keyword id="KW-0547">Nucleotide-binding</keyword>
<keyword id="KW-0648">Protein biosynthesis</keyword>
<keyword id="KW-1185">Reference proteome</keyword>